<gene>
    <name evidence="1" type="primary">gatC</name>
    <name type="ordered locus">Hore_02320</name>
</gene>
<accession>B8D124</accession>
<dbReference type="EC" id="6.3.5.-" evidence="1"/>
<dbReference type="EMBL" id="CP001098">
    <property type="protein sequence ID" value="ACL68993.1"/>
    <property type="molecule type" value="Genomic_DNA"/>
</dbReference>
<dbReference type="RefSeq" id="WP_012635191.1">
    <property type="nucleotide sequence ID" value="NC_011899.1"/>
</dbReference>
<dbReference type="SMR" id="B8D124"/>
<dbReference type="STRING" id="373903.Hore_02320"/>
<dbReference type="KEGG" id="hor:Hore_02320"/>
<dbReference type="eggNOG" id="COG0721">
    <property type="taxonomic scope" value="Bacteria"/>
</dbReference>
<dbReference type="HOGENOM" id="CLU_105899_6_1_9"/>
<dbReference type="OrthoDB" id="9813938at2"/>
<dbReference type="Proteomes" id="UP000000719">
    <property type="component" value="Chromosome"/>
</dbReference>
<dbReference type="GO" id="GO:0050566">
    <property type="term" value="F:asparaginyl-tRNA synthase (glutamine-hydrolyzing) activity"/>
    <property type="evidence" value="ECO:0007669"/>
    <property type="project" value="RHEA"/>
</dbReference>
<dbReference type="GO" id="GO:0005524">
    <property type="term" value="F:ATP binding"/>
    <property type="evidence" value="ECO:0007669"/>
    <property type="project" value="UniProtKB-KW"/>
</dbReference>
<dbReference type="GO" id="GO:0050567">
    <property type="term" value="F:glutaminyl-tRNA synthase (glutamine-hydrolyzing) activity"/>
    <property type="evidence" value="ECO:0007669"/>
    <property type="project" value="UniProtKB-UniRule"/>
</dbReference>
<dbReference type="GO" id="GO:0070681">
    <property type="term" value="P:glutaminyl-tRNAGln biosynthesis via transamidation"/>
    <property type="evidence" value="ECO:0007669"/>
    <property type="project" value="TreeGrafter"/>
</dbReference>
<dbReference type="GO" id="GO:0006450">
    <property type="term" value="P:regulation of translational fidelity"/>
    <property type="evidence" value="ECO:0007669"/>
    <property type="project" value="InterPro"/>
</dbReference>
<dbReference type="GO" id="GO:0006412">
    <property type="term" value="P:translation"/>
    <property type="evidence" value="ECO:0007669"/>
    <property type="project" value="UniProtKB-UniRule"/>
</dbReference>
<dbReference type="Gene3D" id="1.10.20.60">
    <property type="entry name" value="Glu-tRNAGln amidotransferase C subunit, N-terminal domain"/>
    <property type="match status" value="1"/>
</dbReference>
<dbReference type="HAMAP" id="MF_00122">
    <property type="entry name" value="GatC"/>
    <property type="match status" value="1"/>
</dbReference>
<dbReference type="InterPro" id="IPR036113">
    <property type="entry name" value="Asp/Glu-ADT_sf_sub_c"/>
</dbReference>
<dbReference type="InterPro" id="IPR003837">
    <property type="entry name" value="GatC"/>
</dbReference>
<dbReference type="NCBIfam" id="TIGR00135">
    <property type="entry name" value="gatC"/>
    <property type="match status" value="1"/>
</dbReference>
<dbReference type="PANTHER" id="PTHR15004">
    <property type="entry name" value="GLUTAMYL-TRNA(GLN) AMIDOTRANSFERASE SUBUNIT C, MITOCHONDRIAL"/>
    <property type="match status" value="1"/>
</dbReference>
<dbReference type="PANTHER" id="PTHR15004:SF0">
    <property type="entry name" value="GLUTAMYL-TRNA(GLN) AMIDOTRANSFERASE SUBUNIT C, MITOCHONDRIAL"/>
    <property type="match status" value="1"/>
</dbReference>
<dbReference type="Pfam" id="PF02686">
    <property type="entry name" value="GatC"/>
    <property type="match status" value="1"/>
</dbReference>
<dbReference type="SUPFAM" id="SSF141000">
    <property type="entry name" value="Glu-tRNAGln amidotransferase C subunit"/>
    <property type="match status" value="1"/>
</dbReference>
<protein>
    <recommendedName>
        <fullName evidence="1">Aspartyl/glutamyl-tRNA(Asn/Gln) amidotransferase subunit C</fullName>
        <shortName evidence="1">Asp/Glu-ADT subunit C</shortName>
        <ecNumber evidence="1">6.3.5.-</ecNumber>
    </recommendedName>
</protein>
<name>GATC_HALOH</name>
<evidence type="ECO:0000255" key="1">
    <source>
        <dbReference type="HAMAP-Rule" id="MF_00122"/>
    </source>
</evidence>
<feature type="chain" id="PRO_1000122568" description="Aspartyl/glutamyl-tRNA(Asn/Gln) amidotransferase subunit C">
    <location>
        <begin position="1"/>
        <end position="95"/>
    </location>
</feature>
<organism>
    <name type="scientific">Halothermothrix orenii (strain H 168 / OCM 544 / DSM 9562)</name>
    <dbReference type="NCBI Taxonomy" id="373903"/>
    <lineage>
        <taxon>Bacteria</taxon>
        <taxon>Bacillati</taxon>
        <taxon>Bacillota</taxon>
        <taxon>Clostridia</taxon>
        <taxon>Halanaerobiales</taxon>
        <taxon>Halothermotrichaceae</taxon>
        <taxon>Halothermothrix</taxon>
    </lineage>
</organism>
<reference key="1">
    <citation type="journal article" date="2009" name="PLoS ONE">
        <title>Genome analysis of the anaerobic thermohalophilic bacterium Halothermothrix orenii.</title>
        <authorList>
            <person name="Mavromatis K."/>
            <person name="Ivanova N."/>
            <person name="Anderson I."/>
            <person name="Lykidis A."/>
            <person name="Hooper S.D."/>
            <person name="Sun H."/>
            <person name="Kunin V."/>
            <person name="Lapidus A."/>
            <person name="Hugenholtz P."/>
            <person name="Patel B."/>
            <person name="Kyrpides N.C."/>
        </authorList>
    </citation>
    <scope>NUCLEOTIDE SEQUENCE [LARGE SCALE GENOMIC DNA]</scope>
    <source>
        <strain>H 168 / OCM 544 / DSM 9562</strain>
    </source>
</reference>
<comment type="function">
    <text evidence="1">Allows the formation of correctly charged Asn-tRNA(Asn) or Gln-tRNA(Gln) through the transamidation of misacylated Asp-tRNA(Asn) or Glu-tRNA(Gln) in organisms which lack either or both of asparaginyl-tRNA or glutaminyl-tRNA synthetases. The reaction takes place in the presence of glutamine and ATP through an activated phospho-Asp-tRNA(Asn) or phospho-Glu-tRNA(Gln).</text>
</comment>
<comment type="catalytic activity">
    <reaction evidence="1">
        <text>L-glutamyl-tRNA(Gln) + L-glutamine + ATP + H2O = L-glutaminyl-tRNA(Gln) + L-glutamate + ADP + phosphate + H(+)</text>
        <dbReference type="Rhea" id="RHEA:17521"/>
        <dbReference type="Rhea" id="RHEA-COMP:9681"/>
        <dbReference type="Rhea" id="RHEA-COMP:9684"/>
        <dbReference type="ChEBI" id="CHEBI:15377"/>
        <dbReference type="ChEBI" id="CHEBI:15378"/>
        <dbReference type="ChEBI" id="CHEBI:29985"/>
        <dbReference type="ChEBI" id="CHEBI:30616"/>
        <dbReference type="ChEBI" id="CHEBI:43474"/>
        <dbReference type="ChEBI" id="CHEBI:58359"/>
        <dbReference type="ChEBI" id="CHEBI:78520"/>
        <dbReference type="ChEBI" id="CHEBI:78521"/>
        <dbReference type="ChEBI" id="CHEBI:456216"/>
    </reaction>
</comment>
<comment type="catalytic activity">
    <reaction evidence="1">
        <text>L-aspartyl-tRNA(Asn) + L-glutamine + ATP + H2O = L-asparaginyl-tRNA(Asn) + L-glutamate + ADP + phosphate + 2 H(+)</text>
        <dbReference type="Rhea" id="RHEA:14513"/>
        <dbReference type="Rhea" id="RHEA-COMP:9674"/>
        <dbReference type="Rhea" id="RHEA-COMP:9677"/>
        <dbReference type="ChEBI" id="CHEBI:15377"/>
        <dbReference type="ChEBI" id="CHEBI:15378"/>
        <dbReference type="ChEBI" id="CHEBI:29985"/>
        <dbReference type="ChEBI" id="CHEBI:30616"/>
        <dbReference type="ChEBI" id="CHEBI:43474"/>
        <dbReference type="ChEBI" id="CHEBI:58359"/>
        <dbReference type="ChEBI" id="CHEBI:78515"/>
        <dbReference type="ChEBI" id="CHEBI:78516"/>
        <dbReference type="ChEBI" id="CHEBI:456216"/>
    </reaction>
</comment>
<comment type="subunit">
    <text evidence="1">Heterotrimer of A, B and C subunits.</text>
</comment>
<comment type="similarity">
    <text evidence="1">Belongs to the GatC family.</text>
</comment>
<sequence length="95" mass="10681">MIKKEEVEKIAGLAYLKLSDEERETFTRQLGDILDYVEKLNELDTDGVVPTAYTVPMKNVLRDDKVGSSIPREEALDNAPDKKDGLFRVPSIIGE</sequence>
<proteinExistence type="inferred from homology"/>
<keyword id="KW-0067">ATP-binding</keyword>
<keyword id="KW-0436">Ligase</keyword>
<keyword id="KW-0547">Nucleotide-binding</keyword>
<keyword id="KW-0648">Protein biosynthesis</keyword>
<keyword id="KW-1185">Reference proteome</keyword>